<proteinExistence type="predicted"/>
<gene>
    <name type="ordered locus">MG306</name>
</gene>
<reference key="1">
    <citation type="journal article" date="1995" name="Science">
        <title>The minimal gene complement of Mycoplasma genitalium.</title>
        <authorList>
            <person name="Fraser C.M."/>
            <person name="Gocayne J.D."/>
            <person name="White O."/>
            <person name="Adams M.D."/>
            <person name="Clayton R.A."/>
            <person name="Fleischmann R.D."/>
            <person name="Bult C.J."/>
            <person name="Kerlavage A.R."/>
            <person name="Sutton G.G."/>
            <person name="Kelley J.M."/>
            <person name="Fritchman J.L."/>
            <person name="Weidman J.F."/>
            <person name="Small K.V."/>
            <person name="Sandusky M."/>
            <person name="Fuhrmann J.L."/>
            <person name="Nguyen D.T."/>
            <person name="Utterback T.R."/>
            <person name="Saudek D.M."/>
            <person name="Phillips C.A."/>
            <person name="Merrick J.M."/>
            <person name="Tomb J.-F."/>
            <person name="Dougherty B.A."/>
            <person name="Bott K.F."/>
            <person name="Hu P.-C."/>
            <person name="Lucier T.S."/>
            <person name="Peterson S.N."/>
            <person name="Smith H.O."/>
            <person name="Hutchison C.A. III"/>
            <person name="Venter J.C."/>
        </authorList>
    </citation>
    <scope>NUCLEOTIDE SEQUENCE [LARGE SCALE GENOMIC DNA]</scope>
    <source>
        <strain>ATCC 33530 / DSM 19775 / NCTC 10195 / G37</strain>
    </source>
</reference>
<feature type="chain" id="PRO_0000210524" description="Uncharacterized protein MG306">
    <location>
        <begin position="1"/>
        <end position="393"/>
    </location>
</feature>
<feature type="transmembrane region" description="Helical" evidence="1">
    <location>
        <begin position="15"/>
        <end position="35"/>
    </location>
</feature>
<feature type="transmembrane region" description="Helical" evidence="1">
    <location>
        <begin position="56"/>
        <end position="76"/>
    </location>
</feature>
<feature type="transmembrane region" description="Helical" evidence="1">
    <location>
        <begin position="86"/>
        <end position="106"/>
    </location>
</feature>
<feature type="transmembrane region" description="Helical" evidence="1">
    <location>
        <begin position="131"/>
        <end position="151"/>
    </location>
</feature>
<feature type="transmembrane region" description="Helical" evidence="1">
    <location>
        <begin position="176"/>
        <end position="196"/>
    </location>
</feature>
<feature type="transmembrane region" description="Helical" evidence="1">
    <location>
        <begin position="253"/>
        <end position="273"/>
    </location>
</feature>
<feature type="transmembrane region" description="Helical" evidence="1">
    <location>
        <begin position="289"/>
        <end position="309"/>
    </location>
</feature>
<feature type="transmembrane region" description="Helical" evidence="1">
    <location>
        <begin position="349"/>
        <end position="369"/>
    </location>
</feature>
<evidence type="ECO:0000255" key="1"/>
<evidence type="ECO:0000305" key="2"/>
<sequence>MAKLTTNTFFNTKNIVAFSFFLVFLIVISVIVTIFFLGVSVDDVKTIITAINYQNWGWIFVVILGFLVSVLWNVIINWWVSRRFCFYASWWEWLLFGFVVQFFQIVTPLSLGQDPFRLYWFIKKGMKKQTAVLIVTSTGAFWNLSQALITWPSFFVLSKNYQLLANNHNSFVSYWLSLTGMIFDVVVAILFIVIAFNKKMHVLIYSLVNQFRKWLKRPYLTKEQIYQRFIEKAEFNKLYGIEMRRWGLTIFKLLANMVVAIVSYFSLFGVFMITKTVNTTNNVIDQYSLIDLFNITNIAVTASNFIPVASGEGATQFVMTSFLNAFKPTDQFLHDQIKDGVFLWRLLSVYLPAIFTGICFVVWIVQVIWEFKKTVNVPLKTVNTVSLETKKDK</sequence>
<accession>P47548</accession>
<comment type="subcellular location">
    <subcellularLocation>
        <location evidence="2">Cell membrane</location>
        <topology evidence="2">Multi-pass membrane protein</topology>
    </subcellularLocation>
</comment>
<keyword id="KW-1003">Cell membrane</keyword>
<keyword id="KW-0472">Membrane</keyword>
<keyword id="KW-1185">Reference proteome</keyword>
<keyword id="KW-0812">Transmembrane</keyword>
<keyword id="KW-1133">Transmembrane helix</keyword>
<dbReference type="EMBL" id="L43967">
    <property type="protein sequence ID" value="AAC71528.1"/>
    <property type="molecule type" value="Genomic_DNA"/>
</dbReference>
<dbReference type="PIR" id="H64233">
    <property type="entry name" value="H64233"/>
</dbReference>
<dbReference type="RefSeq" id="WP_010869420.1">
    <property type="nucleotide sequence ID" value="NC_000908.2"/>
</dbReference>
<dbReference type="SMR" id="P47548"/>
<dbReference type="STRING" id="243273.MG_306"/>
<dbReference type="GeneID" id="88282469"/>
<dbReference type="KEGG" id="mge:MG_306"/>
<dbReference type="eggNOG" id="COG0392">
    <property type="taxonomic scope" value="Bacteria"/>
</dbReference>
<dbReference type="HOGENOM" id="CLU_629808_0_0_14"/>
<dbReference type="InParanoid" id="P47548"/>
<dbReference type="OrthoDB" id="394179at2"/>
<dbReference type="BioCyc" id="MGEN243273:G1GJ2-375-MONOMER"/>
<dbReference type="Proteomes" id="UP000000807">
    <property type="component" value="Chromosome"/>
</dbReference>
<dbReference type="GO" id="GO:0005886">
    <property type="term" value="C:plasma membrane"/>
    <property type="evidence" value="ECO:0007669"/>
    <property type="project" value="UniProtKB-SubCell"/>
</dbReference>
<name>Y306_MYCGE</name>
<protein>
    <recommendedName>
        <fullName>Uncharacterized protein MG306</fullName>
    </recommendedName>
</protein>
<organism>
    <name type="scientific">Mycoplasma genitalium (strain ATCC 33530 / DSM 19775 / NCTC 10195 / G37)</name>
    <name type="common">Mycoplasmoides genitalium</name>
    <dbReference type="NCBI Taxonomy" id="243273"/>
    <lineage>
        <taxon>Bacteria</taxon>
        <taxon>Bacillati</taxon>
        <taxon>Mycoplasmatota</taxon>
        <taxon>Mycoplasmoidales</taxon>
        <taxon>Mycoplasmoidaceae</taxon>
        <taxon>Mycoplasmoides</taxon>
    </lineage>
</organism>